<sequence length="675" mass="74091">MAAQKKKAQDEYGAASITILEGLEAVRKRPGMYIGSTGERGLHHLIWEVVDNAVDEAMAGYATTVNVVLLEDGGVEVADDGRGIPVATHASGIPTVDVVMTQLHAGGKFDSDAYAISGGLHGVGVSVVNALSTRLEVEIKRDGYEWSQVYEKSEPLGLKQGAPTKKTGSTVRFWADPAVFETTEYDFETVARRLQEMAFLNKGLTINLTDERVTQDEVVDEVVSDVAEAPKSASERAAESTAPHKVKSRTFHYPGGLVDFVKHINRTKNAIHSSIVDFSGKGTGHEVEIAMQWNAGYSESVHTFANTINTHEGGTHEEGFRSALTSVVNKYAKDRKLLKDKDPNLTGDDIREGLAAVISVKVSEPQFEGQTKTKLGNTEVKSFVQKVCNEQLTHWFEANPTDAKVVVNKAVSSAQARIAARKARELVRRKSATDIGGLPGKLADCRSTDPRKSELYVVEGDSAGGSAKSGRDSMFQAILPLRGKIINVEKARIDRVLKNTEVQAIITALGTGIHDEFDIGKLRYHKIVLMADADVDGQHISTLLLTLLFRFMRPLIENGHVFLAQPPLYKLKWQRSDPEFAYSDRERDGLLEAGLKAGKKINKEDGIQRYKGLGEMDAKELWETTMDPSVRVLRQVTLDDAAAADELFSILMGEDVDARRSFITRNAKDVRFLDV</sequence>
<proteinExistence type="inferred from homology"/>
<accession>P9WG44</accession>
<accession>L0T585</accession>
<accession>P0C5C5</accession>
<accession>P41514</accession>
<accession>P77897</accession>
<feature type="chain" id="PRO_0000428426" description="DNA gyrase subunit B">
    <location>
        <begin position="1"/>
        <end position="675"/>
    </location>
</feature>
<feature type="domain" description="Toprim" evidence="1">
    <location>
        <begin position="453"/>
        <end position="567"/>
    </location>
</feature>
<feature type="binding site" evidence="1">
    <location>
        <position position="459"/>
    </location>
    <ligand>
        <name>Mg(2+)</name>
        <dbReference type="ChEBI" id="CHEBI:18420"/>
        <label>1</label>
        <note>catalytic</note>
    </ligand>
</feature>
<feature type="binding site" evidence="1">
    <location>
        <position position="532"/>
    </location>
    <ligand>
        <name>Mg(2+)</name>
        <dbReference type="ChEBI" id="CHEBI:18420"/>
        <label>1</label>
        <note>catalytic</note>
    </ligand>
</feature>
<feature type="binding site" evidence="1">
    <location>
        <position position="532"/>
    </location>
    <ligand>
        <name>Mg(2+)</name>
        <dbReference type="ChEBI" id="CHEBI:18420"/>
        <label>2</label>
    </ligand>
</feature>
<feature type="binding site" evidence="1">
    <location>
        <position position="534"/>
    </location>
    <ligand>
        <name>Mg(2+)</name>
        <dbReference type="ChEBI" id="CHEBI:18420"/>
        <label>2</label>
    </ligand>
</feature>
<feature type="site" description="Interaction with DNA" evidence="1">
    <location>
        <position position="484"/>
    </location>
</feature>
<feature type="site" description="Interaction with DNA" evidence="1">
    <location>
        <position position="487"/>
    </location>
</feature>
<reference key="1">
    <citation type="journal article" date="2002" name="J. Bacteriol.">
        <title>Whole-genome comparison of Mycobacterium tuberculosis clinical and laboratory strains.</title>
        <authorList>
            <person name="Fleischmann R.D."/>
            <person name="Alland D."/>
            <person name="Eisen J.A."/>
            <person name="Carpenter L."/>
            <person name="White O."/>
            <person name="Peterson J.D."/>
            <person name="DeBoy R.T."/>
            <person name="Dodson R.J."/>
            <person name="Gwinn M.L."/>
            <person name="Haft D.H."/>
            <person name="Hickey E.K."/>
            <person name="Kolonay J.F."/>
            <person name="Nelson W.C."/>
            <person name="Umayam L.A."/>
            <person name="Ermolaeva M.D."/>
            <person name="Salzberg S.L."/>
            <person name="Delcher A."/>
            <person name="Utterback T.R."/>
            <person name="Weidman J.F."/>
            <person name="Khouri H.M."/>
            <person name="Gill J."/>
            <person name="Mikula A."/>
            <person name="Bishai W."/>
            <person name="Jacobs W.R. Jr."/>
            <person name="Venter J.C."/>
            <person name="Fraser C.M."/>
        </authorList>
    </citation>
    <scope>NUCLEOTIDE SEQUENCE [LARGE SCALE GENOMIC DNA]</scope>
    <source>
        <strain>CDC 1551 / Oshkosh</strain>
    </source>
</reference>
<name>GYRB_MYCTO</name>
<gene>
    <name evidence="1" type="primary">gyrB</name>
    <name type="ordered locus">MT0005</name>
</gene>
<protein>
    <recommendedName>
        <fullName evidence="1">DNA gyrase subunit B</fullName>
        <ecNumber evidence="1">5.6.2.2</ecNumber>
    </recommendedName>
</protein>
<evidence type="ECO:0000255" key="1">
    <source>
        <dbReference type="HAMAP-Rule" id="MF_01898"/>
    </source>
</evidence>
<evidence type="ECO:0000305" key="2"/>
<dbReference type="EC" id="5.6.2.2" evidence="1"/>
<dbReference type="EMBL" id="AE000516">
    <property type="protein sequence ID" value="AAK44228.1"/>
    <property type="status" value="ALT_INIT"/>
    <property type="molecule type" value="Genomic_DNA"/>
</dbReference>
<dbReference type="PIR" id="S44198">
    <property type="entry name" value="S44198"/>
</dbReference>
<dbReference type="RefSeq" id="WP_003917863.1">
    <property type="nucleotide sequence ID" value="NZ_KK341227.1"/>
</dbReference>
<dbReference type="SMR" id="P9WG44"/>
<dbReference type="GeneID" id="45423962"/>
<dbReference type="KEGG" id="mtc:MT0005"/>
<dbReference type="PATRIC" id="fig|83331.31.peg.5"/>
<dbReference type="HOGENOM" id="CLU_006146_4_1_11"/>
<dbReference type="Proteomes" id="UP000001020">
    <property type="component" value="Chromosome"/>
</dbReference>
<dbReference type="GO" id="GO:0005694">
    <property type="term" value="C:chromosome"/>
    <property type="evidence" value="ECO:0007669"/>
    <property type="project" value="InterPro"/>
</dbReference>
<dbReference type="GO" id="GO:0005737">
    <property type="term" value="C:cytoplasm"/>
    <property type="evidence" value="ECO:0007669"/>
    <property type="project" value="UniProtKB-SubCell"/>
</dbReference>
<dbReference type="GO" id="GO:0005524">
    <property type="term" value="F:ATP binding"/>
    <property type="evidence" value="ECO:0007669"/>
    <property type="project" value="UniProtKB-UniRule"/>
</dbReference>
<dbReference type="GO" id="GO:0003677">
    <property type="term" value="F:DNA binding"/>
    <property type="evidence" value="ECO:0007669"/>
    <property type="project" value="UniProtKB-KW"/>
</dbReference>
<dbReference type="GO" id="GO:0034335">
    <property type="term" value="F:DNA negative supercoiling activity"/>
    <property type="evidence" value="ECO:0007669"/>
    <property type="project" value="UniProtKB-ARBA"/>
</dbReference>
<dbReference type="GO" id="GO:0046872">
    <property type="term" value="F:metal ion binding"/>
    <property type="evidence" value="ECO:0007669"/>
    <property type="project" value="UniProtKB-KW"/>
</dbReference>
<dbReference type="GO" id="GO:0006265">
    <property type="term" value="P:DNA topological change"/>
    <property type="evidence" value="ECO:0007669"/>
    <property type="project" value="UniProtKB-UniRule"/>
</dbReference>
<dbReference type="GO" id="GO:0006261">
    <property type="term" value="P:DNA-templated DNA replication"/>
    <property type="evidence" value="ECO:0007669"/>
    <property type="project" value="UniProtKB-UniRule"/>
</dbReference>
<dbReference type="CDD" id="cd16928">
    <property type="entry name" value="HATPase_GyrB-like"/>
    <property type="match status" value="1"/>
</dbReference>
<dbReference type="CDD" id="cd00822">
    <property type="entry name" value="TopoII_Trans_DNA_gyrase"/>
    <property type="match status" value="1"/>
</dbReference>
<dbReference type="CDD" id="cd03366">
    <property type="entry name" value="TOPRIM_TopoIIA_GyrB"/>
    <property type="match status" value="1"/>
</dbReference>
<dbReference type="FunFam" id="3.30.230.10:FF:000005">
    <property type="entry name" value="DNA gyrase subunit B"/>
    <property type="match status" value="1"/>
</dbReference>
<dbReference type="FunFam" id="3.30.565.10:FF:000002">
    <property type="entry name" value="DNA gyrase subunit B"/>
    <property type="match status" value="1"/>
</dbReference>
<dbReference type="FunFam" id="3.40.50.670:FF:000002">
    <property type="entry name" value="DNA gyrase subunit B"/>
    <property type="match status" value="1"/>
</dbReference>
<dbReference type="Gene3D" id="3.30.230.10">
    <property type="match status" value="1"/>
</dbReference>
<dbReference type="Gene3D" id="3.40.50.670">
    <property type="match status" value="1"/>
</dbReference>
<dbReference type="Gene3D" id="3.30.565.10">
    <property type="entry name" value="Histidine kinase-like ATPase, C-terminal domain"/>
    <property type="match status" value="1"/>
</dbReference>
<dbReference type="HAMAP" id="MF_01898">
    <property type="entry name" value="GyrB"/>
    <property type="match status" value="1"/>
</dbReference>
<dbReference type="InterPro" id="IPR002288">
    <property type="entry name" value="DNA_gyrase_B_C"/>
</dbReference>
<dbReference type="InterPro" id="IPR011557">
    <property type="entry name" value="GyrB"/>
</dbReference>
<dbReference type="InterPro" id="IPR036890">
    <property type="entry name" value="HATPase_C_sf"/>
</dbReference>
<dbReference type="InterPro" id="IPR020568">
    <property type="entry name" value="Ribosomal_Su5_D2-typ_SF"/>
</dbReference>
<dbReference type="InterPro" id="IPR014721">
    <property type="entry name" value="Ribsml_uS5_D2-typ_fold_subgr"/>
</dbReference>
<dbReference type="InterPro" id="IPR001241">
    <property type="entry name" value="Topo_IIA"/>
</dbReference>
<dbReference type="InterPro" id="IPR013760">
    <property type="entry name" value="Topo_IIA-like_dom_sf"/>
</dbReference>
<dbReference type="InterPro" id="IPR000565">
    <property type="entry name" value="Topo_IIA_B"/>
</dbReference>
<dbReference type="InterPro" id="IPR013759">
    <property type="entry name" value="Topo_IIA_B_C"/>
</dbReference>
<dbReference type="InterPro" id="IPR013506">
    <property type="entry name" value="Topo_IIA_bsu_dom2"/>
</dbReference>
<dbReference type="InterPro" id="IPR018522">
    <property type="entry name" value="TopoIIA_CS"/>
</dbReference>
<dbReference type="InterPro" id="IPR006171">
    <property type="entry name" value="TOPRIM_dom"/>
</dbReference>
<dbReference type="InterPro" id="IPR034160">
    <property type="entry name" value="TOPRIM_GyrB"/>
</dbReference>
<dbReference type="NCBIfam" id="TIGR01059">
    <property type="entry name" value="gyrB"/>
    <property type="match status" value="1"/>
</dbReference>
<dbReference type="NCBIfam" id="NF004189">
    <property type="entry name" value="PRK05644.1"/>
    <property type="match status" value="1"/>
</dbReference>
<dbReference type="PANTHER" id="PTHR45866:SF1">
    <property type="entry name" value="DNA GYRASE SUBUNIT B, MITOCHONDRIAL"/>
    <property type="match status" value="1"/>
</dbReference>
<dbReference type="PANTHER" id="PTHR45866">
    <property type="entry name" value="DNA GYRASE/TOPOISOMERASE SUBUNIT B"/>
    <property type="match status" value="1"/>
</dbReference>
<dbReference type="Pfam" id="PF00204">
    <property type="entry name" value="DNA_gyraseB"/>
    <property type="match status" value="1"/>
</dbReference>
<dbReference type="Pfam" id="PF00986">
    <property type="entry name" value="DNA_gyraseB_C"/>
    <property type="match status" value="1"/>
</dbReference>
<dbReference type="Pfam" id="PF02518">
    <property type="entry name" value="HATPase_c"/>
    <property type="match status" value="1"/>
</dbReference>
<dbReference type="Pfam" id="PF01751">
    <property type="entry name" value="Toprim"/>
    <property type="match status" value="1"/>
</dbReference>
<dbReference type="PRINTS" id="PR01159">
    <property type="entry name" value="DNAGYRASEB"/>
</dbReference>
<dbReference type="PRINTS" id="PR00418">
    <property type="entry name" value="TPI2FAMILY"/>
</dbReference>
<dbReference type="SMART" id="SM00387">
    <property type="entry name" value="HATPase_c"/>
    <property type="match status" value="1"/>
</dbReference>
<dbReference type="SMART" id="SM00433">
    <property type="entry name" value="TOP2c"/>
    <property type="match status" value="1"/>
</dbReference>
<dbReference type="SUPFAM" id="SSF55874">
    <property type="entry name" value="ATPase domain of HSP90 chaperone/DNA topoisomerase II/histidine kinase"/>
    <property type="match status" value="1"/>
</dbReference>
<dbReference type="SUPFAM" id="SSF54211">
    <property type="entry name" value="Ribosomal protein S5 domain 2-like"/>
    <property type="match status" value="1"/>
</dbReference>
<dbReference type="SUPFAM" id="SSF56719">
    <property type="entry name" value="Type II DNA topoisomerase"/>
    <property type="match status" value="1"/>
</dbReference>
<dbReference type="PROSITE" id="PS00177">
    <property type="entry name" value="TOPOISOMERASE_II"/>
    <property type="match status" value="1"/>
</dbReference>
<dbReference type="PROSITE" id="PS50880">
    <property type="entry name" value="TOPRIM"/>
    <property type="match status" value="1"/>
</dbReference>
<organism>
    <name type="scientific">Mycobacterium tuberculosis (strain CDC 1551 / Oshkosh)</name>
    <dbReference type="NCBI Taxonomy" id="83331"/>
    <lineage>
        <taxon>Bacteria</taxon>
        <taxon>Bacillati</taxon>
        <taxon>Actinomycetota</taxon>
        <taxon>Actinomycetes</taxon>
        <taxon>Mycobacteriales</taxon>
        <taxon>Mycobacteriaceae</taxon>
        <taxon>Mycobacterium</taxon>
        <taxon>Mycobacterium tuberculosis complex</taxon>
    </lineage>
</organism>
<keyword id="KW-0067">ATP-binding</keyword>
<keyword id="KW-0963">Cytoplasm</keyword>
<keyword id="KW-0238">DNA-binding</keyword>
<keyword id="KW-0413">Isomerase</keyword>
<keyword id="KW-0460">Magnesium</keyword>
<keyword id="KW-0479">Metal-binding</keyword>
<keyword id="KW-0547">Nucleotide-binding</keyword>
<keyword id="KW-1185">Reference proteome</keyword>
<keyword id="KW-0799">Topoisomerase</keyword>
<comment type="function">
    <text evidence="1">A type II topoisomerase that negatively supercoils closed circular double-stranded (ds) DNA in an ATP-dependent manner to modulate DNA topology and maintain chromosomes in an underwound state. Negative supercoiling favors strand separation, and DNA replication, transcription, recombination and repair, all of which involve strand separation. Also able to catalyze the interconversion of other topological isomers of dsDNA rings, including catenanes and knotted rings. Type II topoisomerases break and join 2 DNA strands simultaneously in an ATP-dependent manner.</text>
</comment>
<comment type="catalytic activity">
    <reaction evidence="1">
        <text>ATP-dependent breakage, passage and rejoining of double-stranded DNA.</text>
        <dbReference type="EC" id="5.6.2.2"/>
    </reaction>
</comment>
<comment type="cofactor">
    <cofactor evidence="1">
        <name>Mg(2+)</name>
        <dbReference type="ChEBI" id="CHEBI:18420"/>
    </cofactor>
    <cofactor evidence="1">
        <name>Mn(2+)</name>
        <dbReference type="ChEBI" id="CHEBI:29035"/>
    </cofactor>
    <cofactor evidence="1">
        <name>Ca(2+)</name>
        <dbReference type="ChEBI" id="CHEBI:29108"/>
    </cofactor>
    <text evidence="1">Binds two Mg(2+) per subunit. The magnesium ions form salt bridges with both the protein and the DNA. Can also accept other divalent metal cations, such as Mn(2+) or Ca(2+).</text>
</comment>
<comment type="subunit">
    <text evidence="1">Heterotetramer, composed of two GyrA and two GyrB chains. In the heterotetramer, GyrA contains the active site tyrosine that forms a transient covalent intermediate with DNA, while GyrB binds cofactors and catalyzes ATP hydrolysis.</text>
</comment>
<comment type="subcellular location">
    <subcellularLocation>
        <location evidence="1">Cytoplasm</location>
    </subcellularLocation>
</comment>
<comment type="miscellaneous">
    <text evidence="1">Few gyrases are as efficient as E.coli at forming negative supercoils. Not all organisms have 2 type II topoisomerases; in organisms with a single type II topoisomerase this enzyme also has to decatenate newly replicated chromosomes.</text>
</comment>
<comment type="similarity">
    <text evidence="1">Belongs to the type II topoisomerase GyrB family.</text>
</comment>
<comment type="sequence caution" evidence="2">
    <conflict type="erroneous initiation">
        <sequence resource="EMBL-CDS" id="AAK44228"/>
    </conflict>
    <text>Extended N-terminus.</text>
</comment>